<protein>
    <recommendedName>
        <fullName evidence="1">tRNA-specific 2-thiouridylase MnmA</fullName>
        <ecNumber evidence="1">2.8.1.13</ecNumber>
    </recommendedName>
</protein>
<organism>
    <name type="scientific">Methylobacterium radiotolerans (strain ATCC 27329 / DSM 1819 / JCM 2831 / NBRC 15690 / NCIMB 10815 / 0-1)</name>
    <dbReference type="NCBI Taxonomy" id="426355"/>
    <lineage>
        <taxon>Bacteria</taxon>
        <taxon>Pseudomonadati</taxon>
        <taxon>Pseudomonadota</taxon>
        <taxon>Alphaproteobacteria</taxon>
        <taxon>Hyphomicrobiales</taxon>
        <taxon>Methylobacteriaceae</taxon>
        <taxon>Methylobacterium</taxon>
    </lineage>
</organism>
<gene>
    <name evidence="1" type="primary">mnmA</name>
    <name type="ordered locus">Mrad2831_5063</name>
</gene>
<feature type="chain" id="PRO_0000349698" description="tRNA-specific 2-thiouridylase MnmA">
    <location>
        <begin position="1"/>
        <end position="384"/>
    </location>
</feature>
<feature type="region of interest" description="Interaction with tRNA" evidence="1">
    <location>
        <begin position="159"/>
        <end position="161"/>
    </location>
</feature>
<feature type="active site" description="Nucleophile" evidence="1">
    <location>
        <position position="112"/>
    </location>
</feature>
<feature type="active site" description="Cysteine persulfide intermediate" evidence="1">
    <location>
        <position position="209"/>
    </location>
</feature>
<feature type="binding site" evidence="1">
    <location>
        <begin position="18"/>
        <end position="25"/>
    </location>
    <ligand>
        <name>ATP</name>
        <dbReference type="ChEBI" id="CHEBI:30616"/>
    </ligand>
</feature>
<feature type="binding site" evidence="1">
    <location>
        <position position="44"/>
    </location>
    <ligand>
        <name>ATP</name>
        <dbReference type="ChEBI" id="CHEBI:30616"/>
    </ligand>
</feature>
<feature type="binding site" evidence="1">
    <location>
        <position position="136"/>
    </location>
    <ligand>
        <name>ATP</name>
        <dbReference type="ChEBI" id="CHEBI:30616"/>
    </ligand>
</feature>
<feature type="site" description="Interaction with tRNA" evidence="1">
    <location>
        <position position="137"/>
    </location>
</feature>
<feature type="site" description="Interaction with tRNA" evidence="1">
    <location>
        <position position="350"/>
    </location>
</feature>
<feature type="disulfide bond" description="Alternate" evidence="1">
    <location>
        <begin position="112"/>
        <end position="209"/>
    </location>
</feature>
<evidence type="ECO:0000255" key="1">
    <source>
        <dbReference type="HAMAP-Rule" id="MF_00144"/>
    </source>
</evidence>
<dbReference type="EC" id="2.8.1.13" evidence="1"/>
<dbReference type="EMBL" id="CP001001">
    <property type="protein sequence ID" value="ACB27021.1"/>
    <property type="molecule type" value="Genomic_DNA"/>
</dbReference>
<dbReference type="RefSeq" id="WP_012321968.1">
    <property type="nucleotide sequence ID" value="NC_010505.1"/>
</dbReference>
<dbReference type="SMR" id="B1LV15"/>
<dbReference type="STRING" id="426355.Mrad2831_5063"/>
<dbReference type="GeneID" id="6141131"/>
<dbReference type="KEGG" id="mrd:Mrad2831_5063"/>
<dbReference type="eggNOG" id="COG0482">
    <property type="taxonomic scope" value="Bacteria"/>
</dbReference>
<dbReference type="HOGENOM" id="CLU_035188_0_1_5"/>
<dbReference type="OrthoDB" id="9800696at2"/>
<dbReference type="Proteomes" id="UP000006589">
    <property type="component" value="Chromosome"/>
</dbReference>
<dbReference type="GO" id="GO:0005737">
    <property type="term" value="C:cytoplasm"/>
    <property type="evidence" value="ECO:0007669"/>
    <property type="project" value="UniProtKB-SubCell"/>
</dbReference>
<dbReference type="GO" id="GO:0005524">
    <property type="term" value="F:ATP binding"/>
    <property type="evidence" value="ECO:0007669"/>
    <property type="project" value="UniProtKB-KW"/>
</dbReference>
<dbReference type="GO" id="GO:0000049">
    <property type="term" value="F:tRNA binding"/>
    <property type="evidence" value="ECO:0007669"/>
    <property type="project" value="UniProtKB-KW"/>
</dbReference>
<dbReference type="GO" id="GO:0103016">
    <property type="term" value="F:tRNA-uridine 2-sulfurtransferase activity"/>
    <property type="evidence" value="ECO:0007669"/>
    <property type="project" value="UniProtKB-EC"/>
</dbReference>
<dbReference type="GO" id="GO:0002143">
    <property type="term" value="P:tRNA wobble position uridine thiolation"/>
    <property type="evidence" value="ECO:0007669"/>
    <property type="project" value="TreeGrafter"/>
</dbReference>
<dbReference type="CDD" id="cd01998">
    <property type="entry name" value="MnmA_TRMU-like"/>
    <property type="match status" value="1"/>
</dbReference>
<dbReference type="FunFam" id="2.30.30.280:FF:000001">
    <property type="entry name" value="tRNA-specific 2-thiouridylase MnmA"/>
    <property type="match status" value="1"/>
</dbReference>
<dbReference type="FunFam" id="3.40.50.620:FF:000115">
    <property type="entry name" value="tRNA-specific 2-thiouridylase MnmA"/>
    <property type="match status" value="1"/>
</dbReference>
<dbReference type="Gene3D" id="2.30.30.280">
    <property type="entry name" value="Adenine nucleotide alpha hydrolases-like domains"/>
    <property type="match status" value="1"/>
</dbReference>
<dbReference type="Gene3D" id="3.40.50.620">
    <property type="entry name" value="HUPs"/>
    <property type="match status" value="1"/>
</dbReference>
<dbReference type="Gene3D" id="2.40.30.10">
    <property type="entry name" value="Translation factors"/>
    <property type="match status" value="1"/>
</dbReference>
<dbReference type="HAMAP" id="MF_00144">
    <property type="entry name" value="tRNA_thiouridyl_MnmA"/>
    <property type="match status" value="1"/>
</dbReference>
<dbReference type="InterPro" id="IPR004506">
    <property type="entry name" value="MnmA-like"/>
</dbReference>
<dbReference type="InterPro" id="IPR046885">
    <property type="entry name" value="MnmA-like_C"/>
</dbReference>
<dbReference type="InterPro" id="IPR046884">
    <property type="entry name" value="MnmA-like_central"/>
</dbReference>
<dbReference type="InterPro" id="IPR023382">
    <property type="entry name" value="MnmA-like_central_sf"/>
</dbReference>
<dbReference type="InterPro" id="IPR014729">
    <property type="entry name" value="Rossmann-like_a/b/a_fold"/>
</dbReference>
<dbReference type="NCBIfam" id="NF001138">
    <property type="entry name" value="PRK00143.1"/>
    <property type="match status" value="1"/>
</dbReference>
<dbReference type="NCBIfam" id="TIGR00420">
    <property type="entry name" value="trmU"/>
    <property type="match status" value="1"/>
</dbReference>
<dbReference type="PANTHER" id="PTHR11933:SF5">
    <property type="entry name" value="MITOCHONDRIAL TRNA-SPECIFIC 2-THIOURIDYLASE 1"/>
    <property type="match status" value="1"/>
</dbReference>
<dbReference type="PANTHER" id="PTHR11933">
    <property type="entry name" value="TRNA 5-METHYLAMINOMETHYL-2-THIOURIDYLATE -METHYLTRANSFERASE"/>
    <property type="match status" value="1"/>
</dbReference>
<dbReference type="Pfam" id="PF03054">
    <property type="entry name" value="tRNA_Me_trans"/>
    <property type="match status" value="1"/>
</dbReference>
<dbReference type="Pfam" id="PF20258">
    <property type="entry name" value="tRNA_Me_trans_C"/>
    <property type="match status" value="1"/>
</dbReference>
<dbReference type="Pfam" id="PF20259">
    <property type="entry name" value="tRNA_Me_trans_M"/>
    <property type="match status" value="1"/>
</dbReference>
<dbReference type="SUPFAM" id="SSF52402">
    <property type="entry name" value="Adenine nucleotide alpha hydrolases-like"/>
    <property type="match status" value="1"/>
</dbReference>
<sequence>MNALDLPKAPHETRVVVAMSGGVDSSVVAGLLKRQGFDVVGVTLQLYDHGAASHRKGACCAGQDIHDARAAAEHLGIPHYVLDYEDRFRDEVIEKFAESYLAGETPIPCVECNRTVKFRDLLGLARDLDADALATGHYVASRALPGGGRALHRALDPARDQSYFLYATTAEQLDFLRFPLGEMEKTETRALAKELGLSLAEKPDSQDICFVPQGRYSDVIARLRPDAARPGEIVDLDGHVLGRHDGIVHYTVGQRKGLGLSGPEPLYVVRLEPDAARVVVGPRTALATTRIRLSDLNWLGEGPAEAVRDLPVAVRVRSTRPPRPATLTVGPDGAVEVVLAEPEDGVSPGQACAIYADDGPRARVLGGGTIRRVDALSARPREAA</sequence>
<accession>B1LV15</accession>
<reference key="1">
    <citation type="submission" date="2008-03" db="EMBL/GenBank/DDBJ databases">
        <title>Complete sequence of chromosome of Methylobacterium radiotolerans JCM 2831.</title>
        <authorList>
            <consortium name="US DOE Joint Genome Institute"/>
            <person name="Copeland A."/>
            <person name="Lucas S."/>
            <person name="Lapidus A."/>
            <person name="Glavina del Rio T."/>
            <person name="Dalin E."/>
            <person name="Tice H."/>
            <person name="Bruce D."/>
            <person name="Goodwin L."/>
            <person name="Pitluck S."/>
            <person name="Kiss H."/>
            <person name="Brettin T."/>
            <person name="Detter J.C."/>
            <person name="Han C."/>
            <person name="Kuske C.R."/>
            <person name="Schmutz J."/>
            <person name="Larimer F."/>
            <person name="Land M."/>
            <person name="Hauser L."/>
            <person name="Kyrpides N."/>
            <person name="Mikhailova N."/>
            <person name="Marx C.J."/>
            <person name="Richardson P."/>
        </authorList>
    </citation>
    <scope>NUCLEOTIDE SEQUENCE [LARGE SCALE GENOMIC DNA]</scope>
    <source>
        <strain>ATCC 27329 / DSM 1819 / JCM 2831 / NBRC 15690 / NCIMB 10815 / 0-1</strain>
    </source>
</reference>
<comment type="function">
    <text evidence="1">Catalyzes the 2-thiolation of uridine at the wobble position (U34) of tRNA, leading to the formation of s(2)U34.</text>
</comment>
<comment type="catalytic activity">
    <reaction evidence="1">
        <text>S-sulfanyl-L-cysteinyl-[protein] + uridine(34) in tRNA + AH2 + ATP = 2-thiouridine(34) in tRNA + L-cysteinyl-[protein] + A + AMP + diphosphate + H(+)</text>
        <dbReference type="Rhea" id="RHEA:47032"/>
        <dbReference type="Rhea" id="RHEA-COMP:10131"/>
        <dbReference type="Rhea" id="RHEA-COMP:11726"/>
        <dbReference type="Rhea" id="RHEA-COMP:11727"/>
        <dbReference type="Rhea" id="RHEA-COMP:11728"/>
        <dbReference type="ChEBI" id="CHEBI:13193"/>
        <dbReference type="ChEBI" id="CHEBI:15378"/>
        <dbReference type="ChEBI" id="CHEBI:17499"/>
        <dbReference type="ChEBI" id="CHEBI:29950"/>
        <dbReference type="ChEBI" id="CHEBI:30616"/>
        <dbReference type="ChEBI" id="CHEBI:33019"/>
        <dbReference type="ChEBI" id="CHEBI:61963"/>
        <dbReference type="ChEBI" id="CHEBI:65315"/>
        <dbReference type="ChEBI" id="CHEBI:87170"/>
        <dbReference type="ChEBI" id="CHEBI:456215"/>
        <dbReference type="EC" id="2.8.1.13"/>
    </reaction>
</comment>
<comment type="subcellular location">
    <subcellularLocation>
        <location evidence="1">Cytoplasm</location>
    </subcellularLocation>
</comment>
<comment type="similarity">
    <text evidence="1">Belongs to the MnmA/TRMU family.</text>
</comment>
<name>MNMA_METRJ</name>
<proteinExistence type="inferred from homology"/>
<keyword id="KW-0067">ATP-binding</keyword>
<keyword id="KW-0963">Cytoplasm</keyword>
<keyword id="KW-1015">Disulfide bond</keyword>
<keyword id="KW-0547">Nucleotide-binding</keyword>
<keyword id="KW-0694">RNA-binding</keyword>
<keyword id="KW-0808">Transferase</keyword>
<keyword id="KW-0819">tRNA processing</keyword>
<keyword id="KW-0820">tRNA-binding</keyword>